<protein>
    <recommendedName>
        <fullName>GDP-mannose transporter</fullName>
        <shortName>GMT</shortName>
    </recommendedName>
</protein>
<reference key="1">
    <citation type="journal article" date="2004" name="Nature">
        <title>Genome evolution in yeasts.</title>
        <authorList>
            <person name="Dujon B."/>
            <person name="Sherman D."/>
            <person name="Fischer G."/>
            <person name="Durrens P."/>
            <person name="Casaregola S."/>
            <person name="Lafontaine I."/>
            <person name="de Montigny J."/>
            <person name="Marck C."/>
            <person name="Neuveglise C."/>
            <person name="Talla E."/>
            <person name="Goffard N."/>
            <person name="Frangeul L."/>
            <person name="Aigle M."/>
            <person name="Anthouard V."/>
            <person name="Babour A."/>
            <person name="Barbe V."/>
            <person name="Barnay S."/>
            <person name="Blanchin S."/>
            <person name="Beckerich J.-M."/>
            <person name="Beyne E."/>
            <person name="Bleykasten C."/>
            <person name="Boisrame A."/>
            <person name="Boyer J."/>
            <person name="Cattolico L."/>
            <person name="Confanioleri F."/>
            <person name="de Daruvar A."/>
            <person name="Despons L."/>
            <person name="Fabre E."/>
            <person name="Fairhead C."/>
            <person name="Ferry-Dumazet H."/>
            <person name="Groppi A."/>
            <person name="Hantraye F."/>
            <person name="Hennequin C."/>
            <person name="Jauniaux N."/>
            <person name="Joyet P."/>
            <person name="Kachouri R."/>
            <person name="Kerrest A."/>
            <person name="Koszul R."/>
            <person name="Lemaire M."/>
            <person name="Lesur I."/>
            <person name="Ma L."/>
            <person name="Muller H."/>
            <person name="Nicaud J.-M."/>
            <person name="Nikolski M."/>
            <person name="Oztas S."/>
            <person name="Ozier-Kalogeropoulos O."/>
            <person name="Pellenz S."/>
            <person name="Potier S."/>
            <person name="Richard G.-F."/>
            <person name="Straub M.-L."/>
            <person name="Suleau A."/>
            <person name="Swennen D."/>
            <person name="Tekaia F."/>
            <person name="Wesolowski-Louvel M."/>
            <person name="Westhof E."/>
            <person name="Wirth B."/>
            <person name="Zeniou-Meyer M."/>
            <person name="Zivanovic Y."/>
            <person name="Bolotin-Fukuhara M."/>
            <person name="Thierry A."/>
            <person name="Bouchier C."/>
            <person name="Caudron B."/>
            <person name="Scarpelli C."/>
            <person name="Gaillardin C."/>
            <person name="Weissenbach J."/>
            <person name="Wincker P."/>
            <person name="Souciet J.-L."/>
        </authorList>
    </citation>
    <scope>NUCLEOTIDE SEQUENCE [LARGE SCALE GENOMIC DNA]</scope>
    <source>
        <strain>ATCC 8585 / CBS 2359 / DSM 70799 / NBRC 1267 / NRRL Y-1140 / WM37</strain>
    </source>
</reference>
<feature type="chain" id="PRO_0000333524" description="GDP-mannose transporter">
    <location>
        <begin position="1"/>
        <end position="330"/>
    </location>
</feature>
<feature type="topological domain" description="Cytoplasmic" evidence="1">
    <location>
        <begin position="1"/>
        <end position="13"/>
    </location>
</feature>
<feature type="transmembrane region" description="Helical" evidence="2">
    <location>
        <begin position="14"/>
        <end position="34"/>
    </location>
</feature>
<feature type="topological domain" description="Lumenal" evidence="1">
    <location>
        <begin position="35"/>
        <end position="48"/>
    </location>
</feature>
<feature type="transmembrane region" description="Helical" evidence="2">
    <location>
        <begin position="49"/>
        <end position="69"/>
    </location>
</feature>
<feature type="topological domain" description="Cytoplasmic" evidence="1">
    <location>
        <begin position="70"/>
        <end position="81"/>
    </location>
</feature>
<feature type="transmembrane region" description="Helical" evidence="2">
    <location>
        <begin position="82"/>
        <end position="98"/>
    </location>
</feature>
<feature type="topological domain" description="Lumenal" evidence="1">
    <location>
        <begin position="99"/>
        <end position="104"/>
    </location>
</feature>
<feature type="transmembrane region" description="Helical" evidence="2">
    <location>
        <begin position="105"/>
        <end position="124"/>
    </location>
</feature>
<feature type="topological domain" description="Cytoplasmic" evidence="1">
    <location>
        <begin position="125"/>
        <end position="138"/>
    </location>
</feature>
<feature type="transmembrane region" description="Helical" evidence="2">
    <location>
        <begin position="139"/>
        <end position="155"/>
    </location>
</feature>
<feature type="topological domain" description="Lumenal" evidence="1">
    <location>
        <begin position="156"/>
        <end position="170"/>
    </location>
</feature>
<feature type="transmembrane region" description="Helical" evidence="2">
    <location>
        <begin position="171"/>
        <end position="191"/>
    </location>
</feature>
<feature type="topological domain" description="Cytoplasmic" evidence="1">
    <location>
        <begin position="192"/>
        <end position="203"/>
    </location>
</feature>
<feature type="transmembrane region" description="Helical" evidence="2">
    <location>
        <begin position="204"/>
        <end position="224"/>
    </location>
</feature>
<feature type="topological domain" description="Lumenal" evidence="1">
    <location>
        <begin position="225"/>
        <end position="241"/>
    </location>
</feature>
<feature type="transmembrane region" description="Helical" evidence="2">
    <location>
        <begin position="242"/>
        <end position="262"/>
    </location>
</feature>
<feature type="topological domain" description="Cytoplasmic" evidence="1">
    <location>
        <begin position="263"/>
        <end position="269"/>
    </location>
</feature>
<feature type="transmembrane region" description="Helical" evidence="2">
    <location>
        <begin position="270"/>
        <end position="290"/>
    </location>
</feature>
<feature type="topological domain" description="Lumenal" evidence="1">
    <location>
        <begin position="291"/>
        <end position="294"/>
    </location>
</feature>
<feature type="transmembrane region" description="Helical" evidence="2">
    <location>
        <begin position="295"/>
        <end position="315"/>
    </location>
</feature>
<feature type="topological domain" description="Cytoplasmic" evidence="1">
    <location>
        <begin position="316"/>
        <end position="330"/>
    </location>
</feature>
<name>GMT_KLULA</name>
<organism>
    <name type="scientific">Kluyveromyces lactis (strain ATCC 8585 / CBS 2359 / DSM 70799 / NBRC 1267 / NRRL Y-1140 / WM37)</name>
    <name type="common">Yeast</name>
    <name type="synonym">Candida sphaerica</name>
    <dbReference type="NCBI Taxonomy" id="284590"/>
    <lineage>
        <taxon>Eukaryota</taxon>
        <taxon>Fungi</taxon>
        <taxon>Dikarya</taxon>
        <taxon>Ascomycota</taxon>
        <taxon>Saccharomycotina</taxon>
        <taxon>Saccharomycetes</taxon>
        <taxon>Saccharomycetales</taxon>
        <taxon>Saccharomycetaceae</taxon>
        <taxon>Kluyveromyces</taxon>
    </lineage>
</organism>
<keyword id="KW-0968">Cytoplasmic vesicle</keyword>
<keyword id="KW-0256">Endoplasmic reticulum</keyword>
<keyword id="KW-0333">Golgi apparatus</keyword>
<keyword id="KW-0472">Membrane</keyword>
<keyword id="KW-1185">Reference proteome</keyword>
<keyword id="KW-0762">Sugar transport</keyword>
<keyword id="KW-0812">Transmembrane</keyword>
<keyword id="KW-1133">Transmembrane helix</keyword>
<keyword id="KW-0813">Transport</keyword>
<dbReference type="EMBL" id="CR382121">
    <property type="protein sequence ID" value="CAH02647.1"/>
    <property type="molecule type" value="Genomic_DNA"/>
</dbReference>
<dbReference type="RefSeq" id="XP_451059.1">
    <property type="nucleotide sequence ID" value="XM_451059.1"/>
</dbReference>
<dbReference type="SMR" id="Q6CYD0"/>
<dbReference type="FunCoup" id="Q6CYD0">
    <property type="interactions" value="572"/>
</dbReference>
<dbReference type="STRING" id="284590.Q6CYD0"/>
<dbReference type="PaxDb" id="284590-Q6CYD0"/>
<dbReference type="KEGG" id="kla:KLLA0_A01364g"/>
<dbReference type="eggNOG" id="KOG1444">
    <property type="taxonomic scope" value="Eukaryota"/>
</dbReference>
<dbReference type="HOGENOM" id="CLU_025360_1_2_1"/>
<dbReference type="InParanoid" id="Q6CYD0"/>
<dbReference type="OMA" id="VWMLINC"/>
<dbReference type="Proteomes" id="UP000000598">
    <property type="component" value="Chromosome A"/>
</dbReference>
<dbReference type="GO" id="GO:0030659">
    <property type="term" value="C:cytoplasmic vesicle membrane"/>
    <property type="evidence" value="ECO:0007669"/>
    <property type="project" value="UniProtKB-SubCell"/>
</dbReference>
<dbReference type="GO" id="GO:0005789">
    <property type="term" value="C:endoplasmic reticulum membrane"/>
    <property type="evidence" value="ECO:0007669"/>
    <property type="project" value="UniProtKB-SubCell"/>
</dbReference>
<dbReference type="GO" id="GO:0000139">
    <property type="term" value="C:Golgi membrane"/>
    <property type="evidence" value="ECO:0007669"/>
    <property type="project" value="UniProtKB-SubCell"/>
</dbReference>
<dbReference type="GO" id="GO:0055085">
    <property type="term" value="P:transmembrane transport"/>
    <property type="evidence" value="ECO:0007669"/>
    <property type="project" value="InterPro"/>
</dbReference>
<dbReference type="InterPro" id="IPR013657">
    <property type="entry name" value="SCL35B1-4/HUT1"/>
</dbReference>
<dbReference type="InterPro" id="IPR050186">
    <property type="entry name" value="TPT_transporter"/>
</dbReference>
<dbReference type="NCBIfam" id="TIGR00803">
    <property type="entry name" value="nst"/>
    <property type="match status" value="1"/>
</dbReference>
<dbReference type="PANTHER" id="PTHR11132">
    <property type="entry name" value="SOLUTE CARRIER FAMILY 35"/>
    <property type="match status" value="1"/>
</dbReference>
<dbReference type="Pfam" id="PF08449">
    <property type="entry name" value="UAA"/>
    <property type="match status" value="1"/>
</dbReference>
<dbReference type="SUPFAM" id="SSF103481">
    <property type="entry name" value="Multidrug resistance efflux transporter EmrE"/>
    <property type="match status" value="1"/>
</dbReference>
<sequence>MSQLKVDNGPLSHVANSGPISIGAYCFSSIMMTVTNKFVVNLKGFNMNFVMLFVQAAVCVNLLFFLRLLGYAKFRPLNRTDAKNWFPITIFLVLMIYTSSKSLQYLAVPIYTIFKNLTIILIAYGEVLFFGGSVTAMELSSFLLMVLSSVVATLGDQQALKKTADAGASLFNIGYMWMFINCLSSAAFVLVMRKRIKLTNFKDFDTMFYNNILSMPVLLALSFLMEDWSTENLTKNLSRDSVTAMIISGMTAVCISYCSGWCVRVTSSTTYSMVGALNKLPIALSGLIFFDAPKNFLSIFSIFLGFLSGIVYAVAKQKKQQNPQPSAPIK</sequence>
<gene>
    <name type="primary">VRG4</name>
    <name type="ordered locus">KLLA0A01364g</name>
</gene>
<proteinExistence type="inferred from homology"/>
<evidence type="ECO:0000250" key="1"/>
<evidence type="ECO:0000255" key="2"/>
<evidence type="ECO:0000305" key="3"/>
<accession>Q6CYD0</accession>
<comment type="function">
    <text evidence="1">Involved in the import of GDP-mannose from the cytoplasm into the Golgi lumen.</text>
</comment>
<comment type="subunit">
    <text evidence="1">Homooligomer.</text>
</comment>
<comment type="subcellular location">
    <subcellularLocation>
        <location evidence="1">Golgi apparatus membrane</location>
        <topology evidence="1">Multi-pass membrane protein</topology>
    </subcellularLocation>
    <subcellularLocation>
        <location evidence="1">Cytoplasmic vesicle membrane</location>
        <topology evidence="1">Multi-pass membrane protein</topology>
    </subcellularLocation>
    <subcellularLocation>
        <location evidence="1">Endoplasmic reticulum membrane</location>
        <topology evidence="1">Multi-pass membrane protein</topology>
    </subcellularLocation>
</comment>
<comment type="similarity">
    <text evidence="3">Belongs to the TPT transporter family. SLC35D subfamily.</text>
</comment>